<feature type="signal peptide" description="Tat-type signal" evidence="2">
    <location>
        <begin position="1"/>
        <end position="32"/>
    </location>
</feature>
<feature type="chain" id="PRO_0000423556" description="Beta-L-arabinobiosidase">
    <location>
        <begin position="33"/>
        <end position="1943"/>
    </location>
</feature>
<feature type="transmembrane region" description="Helical" evidence="1">
    <location>
        <begin position="1908"/>
        <end position="1928"/>
    </location>
</feature>
<feature type="domain" description="F5/8 type C 1">
    <location>
        <begin position="892"/>
        <end position="1049"/>
    </location>
</feature>
<feature type="domain" description="PKD">
    <location>
        <begin position="1061"/>
        <end position="1157"/>
    </location>
</feature>
<feature type="domain" description="F5/8 type C 2">
    <location>
        <begin position="1142"/>
        <end position="1302"/>
    </location>
</feature>
<feature type="domain" description="FIVAR 1">
    <location>
        <begin position="1678"/>
        <end position="1716"/>
    </location>
</feature>
<feature type="domain" description="FIVAR 2">
    <location>
        <begin position="1746"/>
        <end position="1790"/>
    </location>
</feature>
<feature type="domain" description="FIVAR 3">
    <location>
        <begin position="1823"/>
        <end position="1864"/>
    </location>
</feature>
<feature type="region of interest" description="Disordered" evidence="3">
    <location>
        <begin position="1875"/>
        <end position="1906"/>
    </location>
</feature>
<feature type="compositionally biased region" description="Basic and acidic residues" evidence="3">
    <location>
        <begin position="1890"/>
        <end position="1902"/>
    </location>
</feature>
<feature type="helix" evidence="6">
    <location>
        <begin position="40"/>
        <end position="42"/>
    </location>
</feature>
<feature type="helix" evidence="6">
    <location>
        <begin position="57"/>
        <end position="59"/>
    </location>
</feature>
<feature type="helix" evidence="6">
    <location>
        <begin position="70"/>
        <end position="80"/>
    </location>
</feature>
<feature type="turn" evidence="6">
    <location>
        <begin position="81"/>
        <end position="84"/>
    </location>
</feature>
<feature type="helix" evidence="6">
    <location>
        <begin position="92"/>
        <end position="96"/>
    </location>
</feature>
<feature type="strand" evidence="6">
    <location>
        <begin position="99"/>
        <end position="102"/>
    </location>
</feature>
<feature type="strand" evidence="6">
    <location>
        <begin position="106"/>
        <end position="109"/>
    </location>
</feature>
<feature type="strand" evidence="6">
    <location>
        <begin position="114"/>
        <end position="116"/>
    </location>
</feature>
<feature type="strand" evidence="6">
    <location>
        <begin position="131"/>
        <end position="137"/>
    </location>
</feature>
<feature type="strand" evidence="6">
    <location>
        <begin position="142"/>
        <end position="145"/>
    </location>
</feature>
<feature type="strand" evidence="6">
    <location>
        <begin position="149"/>
        <end position="154"/>
    </location>
</feature>
<feature type="strand" evidence="6">
    <location>
        <begin position="159"/>
        <end position="166"/>
    </location>
</feature>
<feature type="strand" evidence="6">
    <location>
        <begin position="174"/>
        <end position="183"/>
    </location>
</feature>
<feature type="strand" evidence="6">
    <location>
        <begin position="186"/>
        <end position="192"/>
    </location>
</feature>
<feature type="strand" evidence="6">
    <location>
        <begin position="196"/>
        <end position="206"/>
    </location>
</feature>
<feature type="strand" evidence="6">
    <location>
        <begin position="210"/>
        <end position="222"/>
    </location>
</feature>
<feature type="strand" evidence="6">
    <location>
        <begin position="224"/>
        <end position="232"/>
    </location>
</feature>
<feature type="helix" evidence="6">
    <location>
        <begin position="252"/>
        <end position="254"/>
    </location>
</feature>
<feature type="strand" evidence="6">
    <location>
        <begin position="261"/>
        <end position="265"/>
    </location>
</feature>
<feature type="strand" evidence="6">
    <location>
        <begin position="273"/>
        <end position="275"/>
    </location>
</feature>
<feature type="strand" evidence="6">
    <location>
        <begin position="278"/>
        <end position="285"/>
    </location>
</feature>
<feature type="strand" evidence="6">
    <location>
        <begin position="291"/>
        <end position="298"/>
    </location>
</feature>
<feature type="helix" evidence="6">
    <location>
        <begin position="305"/>
        <end position="315"/>
    </location>
</feature>
<feature type="helix" evidence="6">
    <location>
        <begin position="322"/>
        <end position="340"/>
    </location>
</feature>
<feature type="strand" evidence="6">
    <location>
        <begin position="343"/>
        <end position="345"/>
    </location>
</feature>
<feature type="helix" evidence="6">
    <location>
        <begin position="349"/>
        <end position="364"/>
    </location>
</feature>
<feature type="strand" evidence="6">
    <location>
        <begin position="365"/>
        <end position="367"/>
    </location>
</feature>
<feature type="strand" evidence="6">
    <location>
        <begin position="372"/>
        <end position="374"/>
    </location>
</feature>
<feature type="helix" evidence="6">
    <location>
        <begin position="375"/>
        <end position="377"/>
    </location>
</feature>
<feature type="turn" evidence="6">
    <location>
        <begin position="385"/>
        <end position="388"/>
    </location>
</feature>
<feature type="helix" evidence="6">
    <location>
        <begin position="393"/>
        <end position="403"/>
    </location>
</feature>
<feature type="strand" evidence="6">
    <location>
        <begin position="406"/>
        <end position="408"/>
    </location>
</feature>
<feature type="helix" evidence="6">
    <location>
        <begin position="410"/>
        <end position="421"/>
    </location>
</feature>
<feature type="helix" evidence="6">
    <location>
        <begin position="451"/>
        <end position="462"/>
    </location>
</feature>
<feature type="helix" evidence="6">
    <location>
        <begin position="466"/>
        <end position="484"/>
    </location>
</feature>
<feature type="helix" evidence="6">
    <location>
        <begin position="486"/>
        <end position="488"/>
    </location>
</feature>
<feature type="helix" evidence="6">
    <location>
        <begin position="492"/>
        <end position="494"/>
    </location>
</feature>
<feature type="strand" evidence="6">
    <location>
        <begin position="501"/>
        <end position="503"/>
    </location>
</feature>
<feature type="helix" evidence="6">
    <location>
        <begin position="508"/>
        <end position="510"/>
    </location>
</feature>
<feature type="helix" evidence="6">
    <location>
        <begin position="519"/>
        <end position="522"/>
    </location>
</feature>
<feature type="helix" evidence="6">
    <location>
        <begin position="534"/>
        <end position="554"/>
    </location>
</feature>
<feature type="helix" evidence="6">
    <location>
        <begin position="557"/>
        <end position="577"/>
    </location>
</feature>
<feature type="strand" evidence="6">
    <location>
        <begin position="578"/>
        <end position="580"/>
    </location>
</feature>
<feature type="turn" evidence="6">
    <location>
        <begin position="581"/>
        <end position="584"/>
    </location>
</feature>
<feature type="turn" evidence="6">
    <location>
        <begin position="591"/>
        <end position="593"/>
    </location>
</feature>
<feature type="helix" evidence="6">
    <location>
        <begin position="602"/>
        <end position="605"/>
    </location>
</feature>
<feature type="helix" evidence="6">
    <location>
        <begin position="606"/>
        <end position="609"/>
    </location>
</feature>
<feature type="helix" evidence="6">
    <location>
        <begin position="618"/>
        <end position="622"/>
    </location>
</feature>
<feature type="helix" evidence="6">
    <location>
        <begin position="623"/>
        <end position="628"/>
    </location>
</feature>
<feature type="turn" evidence="6">
    <location>
        <begin position="630"/>
        <end position="632"/>
    </location>
</feature>
<feature type="strand" evidence="6">
    <location>
        <begin position="635"/>
        <end position="637"/>
    </location>
</feature>
<feature type="helix" evidence="6">
    <location>
        <begin position="643"/>
        <end position="648"/>
    </location>
</feature>
<feature type="helix" evidence="6">
    <location>
        <begin position="659"/>
        <end position="675"/>
    </location>
</feature>
<feature type="turn" evidence="6">
    <location>
        <begin position="678"/>
        <end position="682"/>
    </location>
</feature>
<feature type="helix" evidence="6">
    <location>
        <begin position="686"/>
        <end position="700"/>
    </location>
</feature>
<feature type="helix" evidence="6">
    <location>
        <begin position="702"/>
        <end position="704"/>
    </location>
</feature>
<feature type="strand" evidence="6">
    <location>
        <begin position="728"/>
        <end position="730"/>
    </location>
</feature>
<feature type="helix" evidence="6">
    <location>
        <begin position="733"/>
        <end position="740"/>
    </location>
</feature>
<feature type="strand" evidence="6">
    <location>
        <begin position="748"/>
        <end position="750"/>
    </location>
</feature>
<feature type="helix" evidence="6">
    <location>
        <begin position="763"/>
        <end position="767"/>
    </location>
</feature>
<feature type="strand" evidence="6">
    <location>
        <begin position="776"/>
        <end position="778"/>
    </location>
</feature>
<feature type="strand" evidence="6">
    <location>
        <begin position="780"/>
        <end position="782"/>
    </location>
</feature>
<feature type="strand" evidence="6">
    <location>
        <begin position="792"/>
        <end position="800"/>
    </location>
</feature>
<feature type="strand" evidence="6">
    <location>
        <begin position="803"/>
        <end position="810"/>
    </location>
</feature>
<feature type="turn" evidence="6">
    <location>
        <begin position="814"/>
        <end position="816"/>
    </location>
</feature>
<feature type="strand" evidence="6">
    <location>
        <begin position="820"/>
        <end position="826"/>
    </location>
</feature>
<feature type="strand" evidence="6">
    <location>
        <begin position="829"/>
        <end position="836"/>
    </location>
</feature>
<feature type="strand" evidence="6">
    <location>
        <begin position="840"/>
        <end position="843"/>
    </location>
</feature>
<feature type="turn" evidence="6">
    <location>
        <begin position="844"/>
        <end position="847"/>
    </location>
</feature>
<feature type="strand" evidence="6">
    <location>
        <begin position="848"/>
        <end position="851"/>
    </location>
</feature>
<feature type="strand" evidence="6">
    <location>
        <begin position="859"/>
        <end position="861"/>
    </location>
</feature>
<feature type="helix" evidence="6">
    <location>
        <begin position="872"/>
        <end position="874"/>
    </location>
</feature>
<feature type="helix" evidence="6">
    <location>
        <begin position="883"/>
        <end position="887"/>
    </location>
</feature>
<keyword id="KW-0002">3D-structure</keyword>
<keyword id="KW-0119">Carbohydrate metabolism</keyword>
<keyword id="KW-0326">Glycosidase</keyword>
<keyword id="KW-0378">Hydrolase</keyword>
<keyword id="KW-0472">Membrane</keyword>
<keyword id="KW-0624">Polysaccharide degradation</keyword>
<keyword id="KW-0677">Repeat</keyword>
<keyword id="KW-0732">Signal</keyword>
<keyword id="KW-0812">Transmembrane</keyword>
<keyword id="KW-1133">Transmembrane helix</keyword>
<gene>
    <name type="primary">hypBA2</name>
    <name type="ordered locus">BLLJ_0212</name>
</gene>
<sequence length="1943" mass="210438">MHHSTRKRWLASIGAVAAVATLATGGAVTAQAADAPVIKNADVAYPSFKGSDDPMKTAANNTTYNPAVSYLQETFDNDVKNLAGIDTDHDFWIDKILTRTGAQPTGKGTNDKGAYSYEGSDGNNYLFTRGRAAYMYTHTPNQLGFVGDTAYWDQTSRSGFTVTVNADGSNQTLNEDASQRKQTPSYFTSLFQTGGKSLKIKEVKYITYNNVMVANLTVESTQDRDVTLTTASPFAAEGADGATELTGRVNVKNNLTTIYPRFSANNQDGSNWIVSGGKLTSTLSLKANEPQTVKIQLGLIANELPDSTKEYEARYTGDLKDAAASYKDSVTTYNKWWVDNAPYVDTPEDNIDKTVVYRWWLSRFNMLDANMPGNTFQYPTSIEGVLGYNNQIVLTSGMFMMDTKWFRNPEYSYGTWLSAGDTAKKSKAGYYYYHDNPGDPANWNHSYTQYITRAGWDSYKVHGGPSTVAEELADQGAEDVQGLLASKSEPDNNDNQNNNDNSLIDWSWWSMTGNDADAVSFSEPGRSGQRMDRADGSANMWANANAAAQAYKAAGDTANAEKMQAIADKIQKEVTTELWDKSDNLLKHKWLNDGAFAKYKEINNYYPYSEGLMPTGNEDYNKALRLFEDSNEFPIFPFFTANQADKAALNFPGSNNFSIINAQPLLQVYSAGIRNYDAAKNGYITNEQFKKLLYWVAFAHYQGGDNNYPDQNEFWNEDNNNVGDVNGDGVINNLDKNLDAAQNGGKITYRSWIHHTQLGTTNWTMVEDVAGMVPREDNKIELNPIEIPGWNYFTVNNLRYHDQDVSIVWDKDGSHYGGPAGYSLYVGGKLAFTSDKLAHLIYDPAAGTVEVKDDSSAQVTVGAEAVKNVKAANQVTFNADQRVTDLFAKSGTNVDSASKSTTNVAKDADVTGTTYAEKDTNYPAKNAVDGKTVMESFWGTKGSENKTDTLNIKFKDGKQKIDDIRLYFYQSSSSQTISGYAEPANYKLEYQKDDGTWAPIADQVRTPNYAGANYNRIQFTPVETTTIRVTFTPQAGMAVGVKEIEAYNTGIKADGTSENQTPQVDAYVSSSTSSGAKLVGTVKDDGLPAEGDVTTTWSQVSGPEGGTAKFVDASAASTTVTFNKEGDYVLKLTASDGEKEGSKEITVHGIPSDGTVNVAPQSSASASYTNGYQPKDNAKKVIDGQVVYANTPNETWNNWGDSTGVEPWLQLKWAGKVPLKKAKVFFWTDGGGVPMVSSWKLQYADADGNWQDVKLADGQSYTVNRNEGNEVKFADAVETDKLRVVFPKGAIVGASEFEAYAIEPVSVDEVNRLVQTGSKADDLKLPSTVSAVYTDGSRRDLAVTWGKVTDAQLAADAVFDVKGTVAGALNGTVAHIAARSDTASQTVGNAQPVEQTVYQNAKSIDLPATVPVKFPNGYNDDRKVTWKDADIKAIDLTKVGDYEVAGTVDDGSSSAAAKLTVHVVADPNGSSTPEPEPEPLVGWIEGKATRTTISPDSEATWSPAEGKLNDGVVVDDTWPTTDDQNVNDKVWGSWGKAKDGMYAQYDFGQSVTIDQSRAQFWANFAETDDSKGGLEVPDAWKIQYLAEDGSWKDVEPTEDYTVVRNSPASRADTDAKGWSAVTFKPVTTKSLRLVLTPYTGSSTFGAAVAEWGVHGIDGTEPEPTPVDKTALESALDTANGLDASRYTAASWAEFQQIIDAAQAVYDDANATAEQVAEQVTKLEDGQKALVALATDVEKSTLQAAIDAAKAEAASGKYTDKSVEALNKAIEAAEGVLKVGEVGEVTQAAVQEASASLNKAVKALEEKPAAETVKKESLEASIEQAKKADKSKYTEEAWQALQSQIAAAQKVYDDKDAKQADVDAAQDALDKAFWATKVEQKPGSQQPGVTDTDKDDKDNKGDRVPPTGAAVSVVAAAAVLLTAAGVTILKRRQSGDHGSARHSA</sequence>
<proteinExistence type="evidence at protein level"/>
<protein>
    <recommendedName>
        <fullName>Beta-L-arabinobiosidase</fullName>
        <ecNumber>3.2.1.187</ecNumber>
    </recommendedName>
    <alternativeName>
        <fullName>Arabinofuranosyl(3)-Hyp beta-L-arabinobiosidase</fullName>
    </alternativeName>
</protein>
<organism>
    <name type="scientific">Bifidobacterium longum subsp. longum (strain ATCC 15707 / DSM 20219 / JCM 1217 / NCTC 11818 / E194b)</name>
    <dbReference type="NCBI Taxonomy" id="565042"/>
    <lineage>
        <taxon>Bacteria</taxon>
        <taxon>Bacillati</taxon>
        <taxon>Actinomycetota</taxon>
        <taxon>Actinomycetes</taxon>
        <taxon>Bifidobacteriales</taxon>
        <taxon>Bifidobacteriaceae</taxon>
        <taxon>Bifidobacterium</taxon>
    </lineage>
</organism>
<accession>E8MGH9</accession>
<accession>E7FK76</accession>
<reference key="1">
    <citation type="journal article" date="2011" name="J. Biol. Chem.">
        <title>Molecular cloning and characterization of a beta-L-arabinobiosidase in Bifidobacterium longum that belongs to a novel glycoside hydrolase family.</title>
        <authorList>
            <person name="Fujita K."/>
            <person name="Sakamoto S."/>
            <person name="Ono Y."/>
            <person name="Wakao M."/>
            <person name="Suda Y."/>
            <person name="Kitahara K."/>
            <person name="Suganuma T."/>
        </authorList>
    </citation>
    <scope>NUCLEOTIDE SEQUENCE [GENOMIC DNA]</scope>
    <scope>FUNCTION</scope>
    <scope>CATALYTIC ACTIVITY</scope>
    <scope>BIOPHYSICOCHEMICAL PROPERTIES</scope>
    <source>
        <strain>ATCC 15707 / DSM 20219 / CCUG 28903 / JCM 1217 / NCIMB 702259 / NCTC 11818 / E194b</strain>
    </source>
</reference>
<reference key="2">
    <citation type="journal article" date="2011" name="Nature">
        <title>Bifidobacteria can protect from enteropathogenic infection through production of acetate.</title>
        <authorList>
            <person name="Fukuda S."/>
            <person name="Toh H."/>
            <person name="Hase K."/>
            <person name="Oshima K."/>
            <person name="Nakanishi Y."/>
            <person name="Yoshimura K."/>
            <person name="Tobe T."/>
            <person name="Clarke J.M."/>
            <person name="Topping D.L."/>
            <person name="Suzuki T."/>
            <person name="Taylor T.D."/>
            <person name="Itoh K."/>
            <person name="Kikuchi J."/>
            <person name="Morita H."/>
            <person name="Hattori M."/>
            <person name="Ohno H."/>
        </authorList>
    </citation>
    <scope>NUCLEOTIDE SEQUENCE [LARGE SCALE GENOMIC DNA]</scope>
    <source>
        <strain>ATCC 15707 / DSM 20219 / CCUG 28903 / JCM 1217 / NCIMB 702259 / NCTC 11818 / E194b</strain>
    </source>
</reference>
<name>HYBA2_BIFL2</name>
<evidence type="ECO:0000255" key="1"/>
<evidence type="ECO:0000255" key="2">
    <source>
        <dbReference type="PROSITE-ProRule" id="PRU00648"/>
    </source>
</evidence>
<evidence type="ECO:0000256" key="3">
    <source>
        <dbReference type="SAM" id="MobiDB-lite"/>
    </source>
</evidence>
<evidence type="ECO:0000269" key="4">
    <source>
    </source>
</evidence>
<evidence type="ECO:0000305" key="5"/>
<evidence type="ECO:0007829" key="6">
    <source>
        <dbReference type="PDB" id="6M5A"/>
    </source>
</evidence>
<comment type="function">
    <text evidence="4">Beta-L-arabinobiosidase that removes L-arabinofuranose-beta-1,2-L-arabinofuranose disaccharide from various substrates such as carrot extensin and potato lectin. Also acts on L-arabinofuranose (Ara)-beta-1,2-Ara-beta-1,2-Ara-beta-Hyp (Ara(3)-Hyp) but not on Ara-beta-1,3-Ara-beta-1,2-Ara-beta-1,2-Ara-beta--Hyp (Ara(4)-Hyp) or Ara-beta-1,2-Ara-beta-Hyp (Ara(2)-Hyp), suggesting a specificity for unmodified Ara(3)-Hyp substrate. In the presence of 1-alkanols, shows transglycosylation activity, retaining the anomeric configuration of the arabinofuranose residue.</text>
</comment>
<comment type="catalytic activity">
    <reaction evidence="4">
        <text>4-O-(beta-L-arabinofuranosyl-(1-&gt;2)-beta-L-arabinofuranosyl-(1-&gt;2)-beta-L-arabinofuranosyl)-(2S,4S)-4-hydroxyproline + H2O = 4-O-(beta-L-arabinofuranosyl)-(2S,4S)-4-hydroxyproline + beta-L-arabinofuranosyl-(1-&gt;2)-beta-L-arabinofuranose</text>
        <dbReference type="Rhea" id="RHEA:38447"/>
        <dbReference type="ChEBI" id="CHEBI:15377"/>
        <dbReference type="ChEBI" id="CHEBI:73180"/>
        <dbReference type="ChEBI" id="CHEBI:75879"/>
        <dbReference type="ChEBI" id="CHEBI:75880"/>
        <dbReference type="EC" id="3.2.1.187"/>
    </reaction>
</comment>
<comment type="biophysicochemical properties">
    <phDependence>
        <text evidence="4">Optimum pH is 5.5-6.0.</text>
    </phDependence>
    <temperatureDependence>
        <text evidence="4">Optimum temperature is 30 degrees Celsius.</text>
    </temperatureDependence>
</comment>
<comment type="subcellular location">
    <subcellularLocation>
        <location evidence="5">Membrane</location>
        <topology evidence="5">Single-pass type I membrane protein</topology>
    </subcellularLocation>
</comment>
<comment type="PTM">
    <text>Predicted to be exported by the Tat system. The position of the signal peptide cleavage has not been experimentally proven.</text>
</comment>
<comment type="similarity">
    <text evidence="5">Belongs to the glycosyl hydrolase 121 family.</text>
</comment>
<dbReference type="EC" id="3.2.1.187"/>
<dbReference type="EMBL" id="AB562506">
    <property type="protein sequence ID" value="BAJ34647.1"/>
    <property type="molecule type" value="Genomic_DNA"/>
</dbReference>
<dbReference type="EMBL" id="AP010888">
    <property type="protein sequence ID" value="BAJ65882.1"/>
    <property type="molecule type" value="Genomic_DNA"/>
</dbReference>
<dbReference type="RefSeq" id="WP_013582352.1">
    <property type="nucleotide sequence ID" value="NC_015067.1"/>
</dbReference>
<dbReference type="PDB" id="6M5A">
    <property type="method" value="X-ray"/>
    <property type="resolution" value="1.85 A"/>
    <property type="chains" value="A=33-894"/>
</dbReference>
<dbReference type="PDBsum" id="6M5A"/>
<dbReference type="SMR" id="E8MGH9"/>
<dbReference type="CAZy" id="GH121">
    <property type="family name" value="Glycoside Hydrolase Family 121"/>
</dbReference>
<dbReference type="GeneID" id="69577455"/>
<dbReference type="KEGG" id="blm:BLLJ_0212"/>
<dbReference type="HOGENOM" id="CLU_002496_0_0_11"/>
<dbReference type="BioCyc" id="MetaCyc:MONOMER-18165"/>
<dbReference type="GO" id="GO:0016020">
    <property type="term" value="C:membrane"/>
    <property type="evidence" value="ECO:0007669"/>
    <property type="project" value="UniProtKB-SubCell"/>
</dbReference>
<dbReference type="GO" id="GO:0016798">
    <property type="term" value="F:hydrolase activity, acting on glycosyl bonds"/>
    <property type="evidence" value="ECO:0007669"/>
    <property type="project" value="UniProtKB-KW"/>
</dbReference>
<dbReference type="GO" id="GO:0000272">
    <property type="term" value="P:polysaccharide catabolic process"/>
    <property type="evidence" value="ECO:0007669"/>
    <property type="project" value="UniProtKB-KW"/>
</dbReference>
<dbReference type="Gene3D" id="1.50.10.10">
    <property type="match status" value="1"/>
</dbReference>
<dbReference type="Gene3D" id="1.20.1270.90">
    <property type="entry name" value="AF1782-like"/>
    <property type="match status" value="3"/>
</dbReference>
<dbReference type="Gene3D" id="2.60.120.260">
    <property type="entry name" value="Galactose-binding domain-like"/>
    <property type="match status" value="3"/>
</dbReference>
<dbReference type="Gene3D" id="2.60.40.10">
    <property type="entry name" value="Immunoglobulins"/>
    <property type="match status" value="1"/>
</dbReference>
<dbReference type="InterPro" id="IPR008928">
    <property type="entry name" value="6-hairpin_glycosidase_sf"/>
</dbReference>
<dbReference type="InterPro" id="IPR012341">
    <property type="entry name" value="6hp_glycosidase-like_sf"/>
</dbReference>
<dbReference type="InterPro" id="IPR011081">
    <property type="entry name" value="Big_4"/>
</dbReference>
<dbReference type="InterPro" id="IPR008979">
    <property type="entry name" value="Galactose-bd-like_sf"/>
</dbReference>
<dbReference type="InterPro" id="IPR053632">
    <property type="entry name" value="GH121"/>
</dbReference>
<dbReference type="InterPro" id="IPR013783">
    <property type="entry name" value="Ig-like_fold"/>
</dbReference>
<dbReference type="InterPro" id="IPR054491">
    <property type="entry name" value="MGH1-like_GH"/>
</dbReference>
<dbReference type="InterPro" id="IPR006311">
    <property type="entry name" value="TAT_signal"/>
</dbReference>
<dbReference type="NCBIfam" id="NF041578">
    <property type="entry name" value="betaarabinsidaseHypBA2"/>
    <property type="match status" value="1"/>
</dbReference>
<dbReference type="Pfam" id="PF07532">
    <property type="entry name" value="Big_4"/>
    <property type="match status" value="2"/>
</dbReference>
<dbReference type="Pfam" id="PF07554">
    <property type="entry name" value="FIVAR"/>
    <property type="match status" value="3"/>
</dbReference>
<dbReference type="Pfam" id="PF22422">
    <property type="entry name" value="MGH1-like_GH"/>
    <property type="match status" value="1"/>
</dbReference>
<dbReference type="SUPFAM" id="SSF49785">
    <property type="entry name" value="Galactose-binding domain-like"/>
    <property type="match status" value="2"/>
</dbReference>
<dbReference type="SUPFAM" id="SSF48208">
    <property type="entry name" value="Six-hairpin glycosidases"/>
    <property type="match status" value="1"/>
</dbReference>
<dbReference type="PROSITE" id="PS51318">
    <property type="entry name" value="TAT"/>
    <property type="match status" value="1"/>
</dbReference>